<name>PSB30_CYAPA</name>
<keyword id="KW-0194">Cyanelle</keyword>
<keyword id="KW-0472">Membrane</keyword>
<keyword id="KW-0602">Photosynthesis</keyword>
<keyword id="KW-0604">Photosystem II</keyword>
<keyword id="KW-0934">Plastid</keyword>
<keyword id="KW-0793">Thylakoid</keyword>
<keyword id="KW-0812">Transmembrane</keyword>
<keyword id="KW-1133">Transmembrane helix</keyword>
<evidence type="ECO:0000255" key="1">
    <source>
        <dbReference type="HAMAP-Rule" id="MF_01329"/>
    </source>
</evidence>
<gene>
    <name evidence="1" type="primary">psb30</name>
    <name evidence="1" type="synonym">ycf12</name>
</gene>
<reference key="1">
    <citation type="journal article" date="1995" name="Plant Mol. Biol. Rep.">
        <title>Nucleotide sequence of the cyanelle DNA from Cyanophora paradoxa.</title>
        <authorList>
            <person name="Stirewalt V.L."/>
            <person name="Michalowski C.B."/>
            <person name="Loeffelhardt W."/>
            <person name="Bohnert H.J."/>
            <person name="Bryant D.A."/>
        </authorList>
    </citation>
    <scope>NUCLEOTIDE SEQUENCE [LARGE SCALE GENOMIC DNA]</scope>
    <source>
        <strain>UTEX LB 555 / Pringsheim</strain>
    </source>
</reference>
<reference key="2">
    <citation type="book" date="1997" name="Eukaryotism and symbiosis">
        <title>The complete sequence of the cyanelle genome of Cyanophora paradoxa: the genetic complexity of a primitive plastid.</title>
        <editorList>
            <person name="Schenk H.E.A."/>
            <person name="Herrmann R."/>
            <person name="Jeon K.W."/>
            <person name="Mueller N.E."/>
            <person name="Schwemmler W."/>
        </editorList>
        <authorList>
            <person name="Loeffelhardt W."/>
            <person name="Stirewalt V.L."/>
            <person name="Michalowski C.B."/>
            <person name="Annarella M."/>
            <person name="Farley J.Y."/>
            <person name="Schluchter W.M."/>
            <person name="Chung S."/>
            <person name="Newmann-Spallart C."/>
            <person name="Steiner J.M."/>
            <person name="Jakowitsch J."/>
            <person name="Bohnert H.J."/>
            <person name="Bryant D.A."/>
        </authorList>
    </citation>
    <scope>NUCLEOTIDE SEQUENCE [LARGE SCALE GENOMIC DNA]</scope>
    <source>
        <strain>UTEX LB 555 / Pringsheim</strain>
    </source>
</reference>
<accession>P48256</accession>
<protein>
    <recommendedName>
        <fullName evidence="1">Photosystem II reaction center protein Psb30</fullName>
    </recommendedName>
    <alternativeName>
        <fullName evidence="1">Photosystem II reaction center protein Ycf12</fullName>
    </alternativeName>
</protein>
<proteinExistence type="inferred from homology"/>
<comment type="function">
    <text evidence="1">A core subunit of photosystem II (PSII), probably helps stabilize the reaction center.</text>
</comment>
<comment type="subunit">
    <text evidence="1">PSII is composed of 1 copy each of membrane proteins PsbA, PsbB, PsbC, PsbD, PsbE, PsbF, PsbH, PsbI, PsbJ, PsbK, PsbL, PsbM, PsbT, PsbX, PsbY, PsbZ, Psb30/Ycf12, peripheral proteins of the oxygen-evolving complex and a large number of cofactors. It forms dimeric complexes.</text>
</comment>
<comment type="subcellular location">
    <subcellularLocation>
        <location evidence="1">Plastid</location>
        <location evidence="1">Cyanelle thylakoid membrane</location>
        <topology evidence="1">Single-pass membrane protein</topology>
    </subcellularLocation>
</comment>
<comment type="similarity">
    <text evidence="1">Belongs to the Psb30/Ycf12 family.</text>
</comment>
<organism>
    <name type="scientific">Cyanophora paradoxa</name>
    <dbReference type="NCBI Taxonomy" id="2762"/>
    <lineage>
        <taxon>Eukaryota</taxon>
        <taxon>Glaucocystophyceae</taxon>
        <taxon>Cyanophoraceae</taxon>
        <taxon>Cyanophora</taxon>
    </lineage>
</organism>
<feature type="chain" id="PRO_0000059017" description="Photosystem II reaction center protein Psb30">
    <location>
        <begin position="1"/>
        <end position="36"/>
    </location>
</feature>
<feature type="transmembrane region" description="Helical" evidence="1">
    <location>
        <begin position="8"/>
        <end position="28"/>
    </location>
</feature>
<dbReference type="EMBL" id="U30821">
    <property type="protein sequence ID" value="AAA81244.1"/>
    <property type="molecule type" value="Genomic_DNA"/>
</dbReference>
<dbReference type="PIR" id="T06901">
    <property type="entry name" value="T06901"/>
</dbReference>
<dbReference type="RefSeq" id="NP_043213.1">
    <property type="nucleotide sequence ID" value="NC_001675.1"/>
</dbReference>
<dbReference type="SMR" id="P48256"/>
<dbReference type="GeneID" id="801609"/>
<dbReference type="GO" id="GO:0033115">
    <property type="term" value="C:cyanelle thylakoid membrane"/>
    <property type="evidence" value="ECO:0007669"/>
    <property type="project" value="UniProtKB-SubCell"/>
</dbReference>
<dbReference type="GO" id="GO:0009523">
    <property type="term" value="C:photosystem II"/>
    <property type="evidence" value="ECO:0007669"/>
    <property type="project" value="UniProtKB-KW"/>
</dbReference>
<dbReference type="GO" id="GO:0015979">
    <property type="term" value="P:photosynthesis"/>
    <property type="evidence" value="ECO:0007669"/>
    <property type="project" value="UniProtKB-KW"/>
</dbReference>
<dbReference type="HAMAP" id="MF_01329">
    <property type="entry name" value="PSII_Psb30_Ycf12"/>
    <property type="match status" value="1"/>
</dbReference>
<dbReference type="InterPro" id="IPR010284">
    <property type="entry name" value="PSII_Ycf12_core-subunit"/>
</dbReference>
<dbReference type="NCBIfam" id="NF010239">
    <property type="entry name" value="PRK13686.1"/>
    <property type="match status" value="1"/>
</dbReference>
<dbReference type="Pfam" id="PF05969">
    <property type="entry name" value="PSII_Ycf12"/>
    <property type="match status" value="1"/>
</dbReference>
<geneLocation type="cyanelle"/>
<sequence>MGNLDLEIIAQLTVVTLTLLAGPVIVFLLSVRKGNL</sequence>